<evidence type="ECO:0000250" key="1"/>
<evidence type="ECO:0000255" key="2">
    <source>
        <dbReference type="HAMAP-Rule" id="MF_03035"/>
    </source>
</evidence>
<accession>Q4R7R3</accession>
<dbReference type="EC" id="2.7.1.78" evidence="2"/>
<dbReference type="EMBL" id="AB168751">
    <property type="protein sequence ID" value="BAE00859.1"/>
    <property type="molecule type" value="mRNA"/>
</dbReference>
<dbReference type="RefSeq" id="NP_001274603.1">
    <property type="nucleotide sequence ID" value="NM_001287674.1"/>
</dbReference>
<dbReference type="RefSeq" id="XP_005577901.1">
    <property type="nucleotide sequence ID" value="XM_005577844.4"/>
</dbReference>
<dbReference type="RefSeq" id="XP_005577902.1">
    <property type="nucleotide sequence ID" value="XM_005577845.2"/>
</dbReference>
<dbReference type="RefSeq" id="XP_015289667.1">
    <property type="nucleotide sequence ID" value="XM_015434181.1"/>
</dbReference>
<dbReference type="RefSeq" id="XP_015289668.1">
    <property type="nucleotide sequence ID" value="XM_015434182.3"/>
</dbReference>
<dbReference type="RefSeq" id="XP_065384246.1">
    <property type="nucleotide sequence ID" value="XM_065528174.1"/>
</dbReference>
<dbReference type="SMR" id="Q4R7R3"/>
<dbReference type="STRING" id="9541.ENSMFAP00000039795"/>
<dbReference type="GeneID" id="102133691"/>
<dbReference type="CTD" id="10978"/>
<dbReference type="VEuPathDB" id="HostDB:ENSMFAG00000046074"/>
<dbReference type="eggNOG" id="KOG2749">
    <property type="taxonomic scope" value="Eukaryota"/>
</dbReference>
<dbReference type="OrthoDB" id="3280at314294"/>
<dbReference type="Proteomes" id="UP000233100">
    <property type="component" value="Chromosome 14"/>
</dbReference>
<dbReference type="GO" id="GO:0005849">
    <property type="term" value="C:mRNA cleavage factor complex"/>
    <property type="evidence" value="ECO:0007669"/>
    <property type="project" value="UniProtKB-UniRule"/>
</dbReference>
<dbReference type="GO" id="GO:0000214">
    <property type="term" value="C:tRNA-intron endonuclease complex"/>
    <property type="evidence" value="ECO:0000250"/>
    <property type="project" value="UniProtKB"/>
</dbReference>
<dbReference type="GO" id="GO:0005524">
    <property type="term" value="F:ATP binding"/>
    <property type="evidence" value="ECO:0007669"/>
    <property type="project" value="UniProtKB-UniRule"/>
</dbReference>
<dbReference type="GO" id="GO:0046404">
    <property type="term" value="F:ATP-dependent polydeoxyribonucleotide 5'-hydroxyl-kinase activity"/>
    <property type="evidence" value="ECO:0007669"/>
    <property type="project" value="UniProtKB-UniRule"/>
</dbReference>
<dbReference type="GO" id="GO:0051736">
    <property type="term" value="F:ATP-dependent polyribonucleotide 5'-hydroxyl-kinase activity"/>
    <property type="evidence" value="ECO:0007669"/>
    <property type="project" value="UniProtKB-UniRule"/>
</dbReference>
<dbReference type="GO" id="GO:0021695">
    <property type="term" value="P:cerebellar cortex development"/>
    <property type="evidence" value="ECO:0000250"/>
    <property type="project" value="UniProtKB"/>
</dbReference>
<dbReference type="GO" id="GO:0098795">
    <property type="term" value="P:global gene silencing by mRNA cleavage"/>
    <property type="evidence" value="ECO:0000250"/>
    <property type="project" value="UniProtKB"/>
</dbReference>
<dbReference type="GO" id="GO:0031124">
    <property type="term" value="P:mRNA 3'-end processing"/>
    <property type="evidence" value="ECO:0007669"/>
    <property type="project" value="UniProtKB-UniRule"/>
</dbReference>
<dbReference type="GO" id="GO:0070922">
    <property type="term" value="P:RISC complex assembly"/>
    <property type="evidence" value="ECO:0000250"/>
    <property type="project" value="UniProtKB"/>
</dbReference>
<dbReference type="GO" id="GO:0006388">
    <property type="term" value="P:tRNA splicing, via endonucleolytic cleavage and ligation"/>
    <property type="evidence" value="ECO:0000250"/>
    <property type="project" value="UniProtKB"/>
</dbReference>
<dbReference type="CDD" id="cd01983">
    <property type="entry name" value="SIMIBI"/>
    <property type="match status" value="1"/>
</dbReference>
<dbReference type="FunFam" id="2.40.30.330:FF:000001">
    <property type="entry name" value="Protein CLP1 homolog"/>
    <property type="match status" value="1"/>
</dbReference>
<dbReference type="FunFam" id="3.40.50.300:FF:000454">
    <property type="entry name" value="Protein CLP1 homolog"/>
    <property type="match status" value="1"/>
</dbReference>
<dbReference type="FunFam" id="2.60.120.1030:FF:000001">
    <property type="entry name" value="Protein CLP1 homolog 5"/>
    <property type="match status" value="1"/>
</dbReference>
<dbReference type="Gene3D" id="2.60.120.1030">
    <property type="entry name" value="Clp1, DNA binding domain"/>
    <property type="match status" value="1"/>
</dbReference>
<dbReference type="Gene3D" id="3.40.50.300">
    <property type="entry name" value="P-loop containing nucleotide triphosphate hydrolases"/>
    <property type="match status" value="1"/>
</dbReference>
<dbReference type="Gene3D" id="2.40.30.330">
    <property type="entry name" value="Pre-mRNA cleavage complex subunit Clp1, C-terminal domain"/>
    <property type="match status" value="1"/>
</dbReference>
<dbReference type="HAMAP" id="MF_03035">
    <property type="entry name" value="Clp1"/>
    <property type="match status" value="1"/>
</dbReference>
<dbReference type="InterPro" id="IPR028606">
    <property type="entry name" value="Clp1"/>
</dbReference>
<dbReference type="InterPro" id="IPR045116">
    <property type="entry name" value="Clp1/Grc3"/>
</dbReference>
<dbReference type="InterPro" id="IPR010655">
    <property type="entry name" value="Clp1_C"/>
</dbReference>
<dbReference type="InterPro" id="IPR038238">
    <property type="entry name" value="Clp1_C_sf"/>
</dbReference>
<dbReference type="InterPro" id="IPR032324">
    <property type="entry name" value="Clp1_N"/>
</dbReference>
<dbReference type="InterPro" id="IPR038239">
    <property type="entry name" value="Clp1_N_sf"/>
</dbReference>
<dbReference type="InterPro" id="IPR032319">
    <property type="entry name" value="CLP1_P"/>
</dbReference>
<dbReference type="InterPro" id="IPR027417">
    <property type="entry name" value="P-loop_NTPase"/>
</dbReference>
<dbReference type="PANTHER" id="PTHR12755">
    <property type="entry name" value="CLEAVAGE/POLYADENYLATION FACTOR IA SUBUNIT CLP1P"/>
    <property type="match status" value="1"/>
</dbReference>
<dbReference type="PANTHER" id="PTHR12755:SF6">
    <property type="entry name" value="POLYRIBONUCLEOTIDE 5'-HYDROXYL-KINASE CLP1"/>
    <property type="match status" value="1"/>
</dbReference>
<dbReference type="Pfam" id="PF06807">
    <property type="entry name" value="Clp1"/>
    <property type="match status" value="1"/>
</dbReference>
<dbReference type="Pfam" id="PF16573">
    <property type="entry name" value="CLP1_N"/>
    <property type="match status" value="1"/>
</dbReference>
<dbReference type="Pfam" id="PF16575">
    <property type="entry name" value="CLP1_P"/>
    <property type="match status" value="1"/>
</dbReference>
<dbReference type="SUPFAM" id="SSF52540">
    <property type="entry name" value="P-loop containing nucleoside triphosphate hydrolases"/>
    <property type="match status" value="2"/>
</dbReference>
<comment type="function">
    <text evidence="1">Polynucleotide kinase that can phosphorylate the 5'-hydroxyl groups of double-stranded RNA (dsRNA), single-stranded RNA (ssRNA), double-stranded DNA (dsDNA) and double-stranded DNA:RNA hybrids. dsRNA is phosphorylated more efficiently than dsDNA, and the RNA component of a DNA:RNA hybrid is phosphorylated more efficiently than the DNA component. Plays a key role in both tRNA splicing and mRNA 3'-end formation. Component of the tRNA splicing endonuclease complex: phosphorylates the 5'-terminus of the tRNA 3'-exon during tRNA splicing; this phosphorylation event is a prerequisite for the subsequent ligation of the two exon halves and the production of a mature tRNA. Its role in tRNA splicing and maturation is required for cerebellar development. Component of the pre-mRNA cleavage complex II (CF-II), which seems to be required for mRNA 3'-end formation. Also phosphorylates the 5'-terminus of exogenously introduced short interfering RNAs (siRNAs), which is a necessary prerequisite for their incorporation into the RNA-induced silencing complex (RISC). However, endogenous siRNAs and microRNAs (miRNAs) that are produced by the cleavage of dsRNA precursors by DICER1 already contain a 5'-phosphate group, so this protein may be dispensible for normal RNA-mediated gene silencing (By similarity).</text>
</comment>
<comment type="catalytic activity">
    <reaction evidence="2">
        <text>a 5'-end dephospho-2'-deoxyribonucleoside-DNA + ATP = a 5'-end 5'-phospho-2'-deoxyribonucleoside-DNA + ADP + H(+)</text>
        <dbReference type="Rhea" id="RHEA:15669"/>
        <dbReference type="Rhea" id="RHEA-COMP:13180"/>
        <dbReference type="Rhea" id="RHEA-COMP:13184"/>
        <dbReference type="ChEBI" id="CHEBI:15378"/>
        <dbReference type="ChEBI" id="CHEBI:30616"/>
        <dbReference type="ChEBI" id="CHEBI:136412"/>
        <dbReference type="ChEBI" id="CHEBI:136416"/>
        <dbReference type="ChEBI" id="CHEBI:456216"/>
        <dbReference type="EC" id="2.7.1.78"/>
    </reaction>
</comment>
<comment type="catalytic activity">
    <reaction evidence="2">
        <text>a 5'-end dephospho-ribonucleoside-RNA + ATP = a 5'-end 5'-phospho-ribonucleoside-RNA + ADP + H(+)</text>
        <dbReference type="Rhea" id="RHEA:54580"/>
        <dbReference type="Rhea" id="RHEA-COMP:13936"/>
        <dbReference type="Rhea" id="RHEA-COMP:15179"/>
        <dbReference type="ChEBI" id="CHEBI:15378"/>
        <dbReference type="ChEBI" id="CHEBI:30616"/>
        <dbReference type="ChEBI" id="CHEBI:138282"/>
        <dbReference type="ChEBI" id="CHEBI:138284"/>
        <dbReference type="ChEBI" id="CHEBI:456216"/>
        <dbReference type="EC" id="2.7.1.78"/>
    </reaction>
</comment>
<comment type="cofactor">
    <cofactor evidence="2">
        <name>Mg(2+)</name>
        <dbReference type="ChEBI" id="CHEBI:18420"/>
    </cofactor>
    <cofactor evidence="2">
        <name>Mn(2+)</name>
        <dbReference type="ChEBI" id="CHEBI:29035"/>
    </cofactor>
    <cofactor evidence="2">
        <name>Ni(2+)</name>
        <dbReference type="ChEBI" id="CHEBI:49786"/>
    </cofactor>
</comment>
<comment type="subunit">
    <text evidence="2">Component of the tRNA splicing endonuclease complex, composed of CLP1, TSEN2, TSEN15, TSEN34 and TSEN54. Component of pre-mRNA cleavage complex II (CF-II). Also associates with numerous components of the pre-mRNA cleavage complex I (CF-I/CFIm), including NUDT21, CPSF2, CPSF3, CPSF6 and CPSF7. Interacts with CSTF2 and SYMPK.</text>
</comment>
<comment type="subcellular location">
    <subcellularLocation>
        <location evidence="2">Nucleus</location>
    </subcellularLocation>
</comment>
<comment type="similarity">
    <text evidence="2">Belongs to the Clp1 family. Clp1 subfamily.</text>
</comment>
<sequence length="425" mass="47646">MGEEANDDKKPTTKFELERETELRFEVEASQSVQLELLTGMAEIFGTELTRNKKFTFDAGAKVAVFTWHGCSVQLSGRTEVAYVSKDTPMLLYLNTHTALEQMRRQAEKEEERGPRVMVVGPTDVGKSTVCRLLLNYAVRLGRRPTYVELDVGQGSVSIPGTMGALYIERPADVEEGFSIQAPLVYHFGSTTPGTNIKLYNKITSRLADVFNQRCEVNRRASVSGCVINTCGWVKGSGYQALVHAASAFEVDVVVVLDQERLYNELKRDLPHFVRTVLLPKSGGVVERSKDFRRECRDERIREYFYGFRGCFYPHAFNVKFSDVKIYKVGAPTIPDSCLPLGMSQEDNQLKLVPVTPGRDMVHHLLSVSTAEGTEENLSETSVAGFIVVTSVDLEHQVFTVLSPAPRPLPKNFLLIMDIRFMDLK</sequence>
<organism>
    <name type="scientific">Macaca fascicularis</name>
    <name type="common">Crab-eating macaque</name>
    <name type="synonym">Cynomolgus monkey</name>
    <dbReference type="NCBI Taxonomy" id="9541"/>
    <lineage>
        <taxon>Eukaryota</taxon>
        <taxon>Metazoa</taxon>
        <taxon>Chordata</taxon>
        <taxon>Craniata</taxon>
        <taxon>Vertebrata</taxon>
        <taxon>Euteleostomi</taxon>
        <taxon>Mammalia</taxon>
        <taxon>Eutheria</taxon>
        <taxon>Euarchontoglires</taxon>
        <taxon>Primates</taxon>
        <taxon>Haplorrhini</taxon>
        <taxon>Catarrhini</taxon>
        <taxon>Cercopithecidae</taxon>
        <taxon>Cercopithecinae</taxon>
        <taxon>Macaca</taxon>
    </lineage>
</organism>
<proteinExistence type="evidence at transcript level"/>
<protein>
    <recommendedName>
        <fullName evidence="2">Polyribonucleotide 5'-hydroxyl-kinase Clp1</fullName>
        <ecNumber evidence="2">2.7.1.78</ecNumber>
    </recommendedName>
    <alternativeName>
        <fullName evidence="2">Polyadenylation factor Clp1</fullName>
    </alternativeName>
    <alternativeName>
        <fullName evidence="2">Polynucleotide kinase Clp1</fullName>
    </alternativeName>
    <alternativeName>
        <fullName evidence="2">Pre-mRNA cleavage complex II protein Clp1</fullName>
    </alternativeName>
</protein>
<name>CLP1_MACFA</name>
<keyword id="KW-0067">ATP-binding</keyword>
<keyword id="KW-0418">Kinase</keyword>
<keyword id="KW-0460">Magnesium</keyword>
<keyword id="KW-0464">Manganese</keyword>
<keyword id="KW-0507">mRNA processing</keyword>
<keyword id="KW-0533">Nickel</keyword>
<keyword id="KW-0547">Nucleotide-binding</keyword>
<keyword id="KW-0539">Nucleus</keyword>
<keyword id="KW-1185">Reference proteome</keyword>
<keyword id="KW-0808">Transferase</keyword>
<keyword id="KW-0819">tRNA processing</keyword>
<gene>
    <name evidence="2" type="primary">CLP1</name>
    <name type="ORF">QtsA-14570</name>
</gene>
<reference key="1">
    <citation type="submission" date="2005-06" db="EMBL/GenBank/DDBJ databases">
        <title>DNA sequences of macaque genes expressed in brain or testis and its evolutionary implications.</title>
        <authorList>
            <consortium name="International consortium for macaque cDNA sequencing and analysis"/>
        </authorList>
    </citation>
    <scope>NUCLEOTIDE SEQUENCE [LARGE SCALE MRNA]</scope>
    <source>
        <tissue>Testis</tissue>
    </source>
</reference>
<feature type="chain" id="PRO_0000375167" description="Polyribonucleotide 5'-hydroxyl-kinase Clp1">
    <location>
        <begin position="1"/>
        <end position="425"/>
    </location>
</feature>
<feature type="binding site" evidence="2">
    <location>
        <position position="22"/>
    </location>
    <ligand>
        <name>ATP</name>
        <dbReference type="ChEBI" id="CHEBI:30616"/>
    </ligand>
</feature>
<feature type="binding site" evidence="2">
    <location>
        <position position="62"/>
    </location>
    <ligand>
        <name>ATP</name>
        <dbReference type="ChEBI" id="CHEBI:30616"/>
    </ligand>
</feature>
<feature type="binding site" evidence="2">
    <location>
        <begin position="124"/>
        <end position="129"/>
    </location>
    <ligand>
        <name>ATP</name>
        <dbReference type="ChEBI" id="CHEBI:30616"/>
    </ligand>
</feature>